<organism>
    <name type="scientific">Sulfolobus acidocaldarius (strain ATCC 33909 / DSM 639 / JCM 8929 / NBRC 15157 / NCIMB 11770)</name>
    <dbReference type="NCBI Taxonomy" id="330779"/>
    <lineage>
        <taxon>Archaea</taxon>
        <taxon>Thermoproteota</taxon>
        <taxon>Thermoprotei</taxon>
        <taxon>Sulfolobales</taxon>
        <taxon>Sulfolobaceae</taxon>
        <taxon>Sulfolobus</taxon>
    </lineage>
</organism>
<sequence>MEVATLGGGCFWCTEAVFKRVKGVVSVKPGYSGGKVPNPTYEEVCTDETGHAEVVQITFDPSVITYRELLEIFFEIHDPTTPNRQGNDVGSQYRSIILYHSEEQKKIAEEMIKLYERKLGKKVVTELVPFEAFYEAEDYHHDFYDKHKNYPYCKLVIDPKVKKFMKNFPDKASIRI</sequence>
<reference key="1">
    <citation type="journal article" date="2005" name="J. Bacteriol.">
        <title>The genome of Sulfolobus acidocaldarius, a model organism of the Crenarchaeota.</title>
        <authorList>
            <person name="Chen L."/>
            <person name="Bruegger K."/>
            <person name="Skovgaard M."/>
            <person name="Redder P."/>
            <person name="She Q."/>
            <person name="Torarinsson E."/>
            <person name="Greve B."/>
            <person name="Awayez M."/>
            <person name="Zibat A."/>
            <person name="Klenk H.-P."/>
            <person name="Garrett R.A."/>
        </authorList>
    </citation>
    <scope>NUCLEOTIDE SEQUENCE [LARGE SCALE GENOMIC DNA]</scope>
    <source>
        <strain>ATCC 33909 / DSM 639 / JCM 8929 / NBRC 15157 / NCIMB 11770</strain>
    </source>
</reference>
<comment type="function">
    <text evidence="1">Has an important function as a repair enzyme for proteins that have been inactivated by oxidation. Catalyzes the reversible oxidation-reduction of methionine sulfoxide in proteins to methionine.</text>
</comment>
<comment type="catalytic activity">
    <reaction evidence="1">
        <text>L-methionyl-[protein] + [thioredoxin]-disulfide + H2O = L-methionyl-(S)-S-oxide-[protein] + [thioredoxin]-dithiol</text>
        <dbReference type="Rhea" id="RHEA:14217"/>
        <dbReference type="Rhea" id="RHEA-COMP:10698"/>
        <dbReference type="Rhea" id="RHEA-COMP:10700"/>
        <dbReference type="Rhea" id="RHEA-COMP:12313"/>
        <dbReference type="Rhea" id="RHEA-COMP:12315"/>
        <dbReference type="ChEBI" id="CHEBI:15377"/>
        <dbReference type="ChEBI" id="CHEBI:16044"/>
        <dbReference type="ChEBI" id="CHEBI:29950"/>
        <dbReference type="ChEBI" id="CHEBI:44120"/>
        <dbReference type="ChEBI" id="CHEBI:50058"/>
        <dbReference type="EC" id="1.8.4.11"/>
    </reaction>
</comment>
<comment type="catalytic activity">
    <reaction evidence="1">
        <text>[thioredoxin]-disulfide + L-methionine + H2O = L-methionine (S)-S-oxide + [thioredoxin]-dithiol</text>
        <dbReference type="Rhea" id="RHEA:19993"/>
        <dbReference type="Rhea" id="RHEA-COMP:10698"/>
        <dbReference type="Rhea" id="RHEA-COMP:10700"/>
        <dbReference type="ChEBI" id="CHEBI:15377"/>
        <dbReference type="ChEBI" id="CHEBI:29950"/>
        <dbReference type="ChEBI" id="CHEBI:50058"/>
        <dbReference type="ChEBI" id="CHEBI:57844"/>
        <dbReference type="ChEBI" id="CHEBI:58772"/>
        <dbReference type="EC" id="1.8.4.11"/>
    </reaction>
</comment>
<comment type="similarity">
    <text evidence="1">Belongs to the MsrA Met sulfoxide reductase family.</text>
</comment>
<comment type="sequence caution" evidence="2">
    <conflict type="erroneous initiation">
        <sequence resource="EMBL-CDS" id="AAY80517"/>
    </conflict>
</comment>
<evidence type="ECO:0000255" key="1">
    <source>
        <dbReference type="HAMAP-Rule" id="MF_01401"/>
    </source>
</evidence>
<evidence type="ECO:0000305" key="2"/>
<protein>
    <recommendedName>
        <fullName evidence="1">Peptide methionine sulfoxide reductase MsrA</fullName>
        <shortName evidence="1">Protein-methionine-S-oxide reductase</shortName>
        <ecNumber evidence="1">1.8.4.11</ecNumber>
    </recommendedName>
    <alternativeName>
        <fullName evidence="1">Peptide-methionine (S)-S-oxide reductase</fullName>
        <shortName evidence="1">Peptide Met(O) reductase</shortName>
    </alternativeName>
</protein>
<name>MSRA_SULAC</name>
<accession>Q4J9L3</accession>
<gene>
    <name evidence="1" type="primary">msrA</name>
    <name type="ordered locus">Saci_1170</name>
</gene>
<dbReference type="EC" id="1.8.4.11" evidence="1"/>
<dbReference type="EMBL" id="CP000077">
    <property type="protein sequence ID" value="AAY80517.1"/>
    <property type="status" value="ALT_INIT"/>
    <property type="molecule type" value="Genomic_DNA"/>
</dbReference>
<dbReference type="RefSeq" id="WP_230937955.1">
    <property type="nucleotide sequence ID" value="NC_007181.1"/>
</dbReference>
<dbReference type="SMR" id="Q4J9L3"/>
<dbReference type="STRING" id="330779.Saci_1170"/>
<dbReference type="GeneID" id="14551675"/>
<dbReference type="KEGG" id="sai:Saci_1170"/>
<dbReference type="PATRIC" id="fig|330779.12.peg.1134"/>
<dbReference type="eggNOG" id="arCOG02816">
    <property type="taxonomic scope" value="Archaea"/>
</dbReference>
<dbReference type="HOGENOM" id="CLU_031040_10_0_2"/>
<dbReference type="Proteomes" id="UP000001018">
    <property type="component" value="Chromosome"/>
</dbReference>
<dbReference type="GO" id="GO:0033744">
    <property type="term" value="F:L-methionine:thioredoxin-disulfide S-oxidoreductase activity"/>
    <property type="evidence" value="ECO:0007669"/>
    <property type="project" value="RHEA"/>
</dbReference>
<dbReference type="GO" id="GO:0008113">
    <property type="term" value="F:peptide-methionine (S)-S-oxide reductase activity"/>
    <property type="evidence" value="ECO:0007669"/>
    <property type="project" value="UniProtKB-UniRule"/>
</dbReference>
<dbReference type="GO" id="GO:0036211">
    <property type="term" value="P:protein modification process"/>
    <property type="evidence" value="ECO:0007669"/>
    <property type="project" value="UniProtKB-UniRule"/>
</dbReference>
<dbReference type="Gene3D" id="3.30.1060.10">
    <property type="entry name" value="Peptide methionine sulphoxide reductase MsrA"/>
    <property type="match status" value="1"/>
</dbReference>
<dbReference type="HAMAP" id="MF_01401">
    <property type="entry name" value="MsrA"/>
    <property type="match status" value="1"/>
</dbReference>
<dbReference type="InterPro" id="IPR002569">
    <property type="entry name" value="Met_Sox_Rdtase_MsrA_dom"/>
</dbReference>
<dbReference type="InterPro" id="IPR036509">
    <property type="entry name" value="Met_Sox_Rdtase_MsrA_sf"/>
</dbReference>
<dbReference type="NCBIfam" id="TIGR00401">
    <property type="entry name" value="msrA"/>
    <property type="match status" value="1"/>
</dbReference>
<dbReference type="PANTHER" id="PTHR43774">
    <property type="entry name" value="PEPTIDE METHIONINE SULFOXIDE REDUCTASE"/>
    <property type="match status" value="1"/>
</dbReference>
<dbReference type="PANTHER" id="PTHR43774:SF1">
    <property type="entry name" value="PEPTIDE METHIONINE SULFOXIDE REDUCTASE MSRA 2"/>
    <property type="match status" value="1"/>
</dbReference>
<dbReference type="Pfam" id="PF01625">
    <property type="entry name" value="PMSR"/>
    <property type="match status" value="1"/>
</dbReference>
<dbReference type="SUPFAM" id="SSF55068">
    <property type="entry name" value="Peptide methionine sulfoxide reductase"/>
    <property type="match status" value="1"/>
</dbReference>
<proteinExistence type="inferred from homology"/>
<feature type="chain" id="PRO_0000138623" description="Peptide methionine sulfoxide reductase MsrA">
    <location>
        <begin position="1"/>
        <end position="176"/>
    </location>
</feature>
<feature type="active site" evidence="1">
    <location>
        <position position="10"/>
    </location>
</feature>
<keyword id="KW-0560">Oxidoreductase</keyword>
<keyword id="KW-1185">Reference proteome</keyword>